<protein>
    <recommendedName>
        <fullName evidence="1">Ribosomal RNA large subunit methyltransferase H</fullName>
        <ecNumber evidence="1">2.1.1.177</ecNumber>
    </recommendedName>
    <alternativeName>
        <fullName evidence="1">23S rRNA (pseudouridine1915-N3)-methyltransferase</fullName>
    </alternativeName>
    <alternativeName>
        <fullName evidence="1">23S rRNA m3Psi1915 methyltransferase</fullName>
    </alternativeName>
    <alternativeName>
        <fullName evidence="1">rRNA (pseudouridine-N3-)-methyltransferase RlmH</fullName>
    </alternativeName>
</protein>
<dbReference type="EC" id="2.1.1.177" evidence="1"/>
<dbReference type="EMBL" id="CP001047">
    <property type="protein sequence ID" value="ACF07529.1"/>
    <property type="molecule type" value="Genomic_DNA"/>
</dbReference>
<dbReference type="RefSeq" id="WP_012498486.1">
    <property type="nucleotide sequence ID" value="NC_011025.1"/>
</dbReference>
<dbReference type="SMR" id="B3PNC7"/>
<dbReference type="STRING" id="243272.MARTH_orf790"/>
<dbReference type="KEGG" id="mat:MARTH_orf790"/>
<dbReference type="eggNOG" id="COG1576">
    <property type="taxonomic scope" value="Bacteria"/>
</dbReference>
<dbReference type="HOGENOM" id="CLU_100552_2_0_14"/>
<dbReference type="Proteomes" id="UP000008812">
    <property type="component" value="Chromosome"/>
</dbReference>
<dbReference type="GO" id="GO:0005737">
    <property type="term" value="C:cytoplasm"/>
    <property type="evidence" value="ECO:0007669"/>
    <property type="project" value="UniProtKB-SubCell"/>
</dbReference>
<dbReference type="GO" id="GO:0070038">
    <property type="term" value="F:rRNA (pseudouridine-N3-)-methyltransferase activity"/>
    <property type="evidence" value="ECO:0007669"/>
    <property type="project" value="UniProtKB-UniRule"/>
</dbReference>
<dbReference type="CDD" id="cd18081">
    <property type="entry name" value="RlmH-like"/>
    <property type="match status" value="1"/>
</dbReference>
<dbReference type="Gene3D" id="3.40.1280.10">
    <property type="match status" value="1"/>
</dbReference>
<dbReference type="HAMAP" id="MF_00658">
    <property type="entry name" value="23SrRNA_methyltr_H"/>
    <property type="match status" value="1"/>
</dbReference>
<dbReference type="InterPro" id="IPR029028">
    <property type="entry name" value="Alpha/beta_knot_MTases"/>
</dbReference>
<dbReference type="InterPro" id="IPR003742">
    <property type="entry name" value="RlmH-like"/>
</dbReference>
<dbReference type="InterPro" id="IPR029026">
    <property type="entry name" value="tRNA_m1G_MTases_N"/>
</dbReference>
<dbReference type="PANTHER" id="PTHR33603">
    <property type="entry name" value="METHYLTRANSFERASE"/>
    <property type="match status" value="1"/>
</dbReference>
<dbReference type="PANTHER" id="PTHR33603:SF1">
    <property type="entry name" value="RIBOSOMAL RNA LARGE SUBUNIT METHYLTRANSFERASE H"/>
    <property type="match status" value="1"/>
</dbReference>
<dbReference type="Pfam" id="PF02590">
    <property type="entry name" value="SPOUT_MTase"/>
    <property type="match status" value="1"/>
</dbReference>
<dbReference type="PIRSF" id="PIRSF004505">
    <property type="entry name" value="MT_bac"/>
    <property type="match status" value="1"/>
</dbReference>
<dbReference type="SUPFAM" id="SSF75217">
    <property type="entry name" value="alpha/beta knot"/>
    <property type="match status" value="1"/>
</dbReference>
<name>RLMH_META1</name>
<feature type="chain" id="PRO_0000366625" description="Ribosomal RNA large subunit methyltransferase H">
    <location>
        <begin position="1"/>
        <end position="143"/>
    </location>
</feature>
<feature type="binding site" evidence="1">
    <location>
        <position position="95"/>
    </location>
    <ligand>
        <name>S-adenosyl-L-methionine</name>
        <dbReference type="ChEBI" id="CHEBI:59789"/>
    </ligand>
</feature>
<feature type="binding site" evidence="1">
    <location>
        <begin position="111"/>
        <end position="116"/>
    </location>
    <ligand>
        <name>S-adenosyl-L-methionine</name>
        <dbReference type="ChEBI" id="CHEBI:59789"/>
    </ligand>
</feature>
<organism>
    <name type="scientific">Metamycoplasma arthritidis (strain 158L3-1)</name>
    <name type="common">Mycoplasma arthritidis</name>
    <dbReference type="NCBI Taxonomy" id="243272"/>
    <lineage>
        <taxon>Bacteria</taxon>
        <taxon>Bacillati</taxon>
        <taxon>Mycoplasmatota</taxon>
        <taxon>Mycoplasmoidales</taxon>
        <taxon>Metamycoplasmataceae</taxon>
        <taxon>Metamycoplasma</taxon>
    </lineage>
</organism>
<gene>
    <name evidence="1" type="primary">rlmH</name>
    <name type="ordered locus">MARTH_orf790</name>
</gene>
<proteinExistence type="inferred from homology"/>
<reference key="1">
    <citation type="journal article" date="2008" name="Infect. Immun.">
        <title>Genome of Mycoplasma arthritidis.</title>
        <authorList>
            <person name="Dybvig K."/>
            <person name="Zuhua C."/>
            <person name="Lao P."/>
            <person name="Jordan D.S."/>
            <person name="French C.T."/>
            <person name="Tu A.H."/>
            <person name="Loraine A.E."/>
        </authorList>
    </citation>
    <scope>NUCLEOTIDE SEQUENCE [LARGE SCALE GENOMIC DNA]</scope>
    <source>
        <strain>158L3-1</strain>
    </source>
</reference>
<keyword id="KW-0963">Cytoplasm</keyword>
<keyword id="KW-0489">Methyltransferase</keyword>
<keyword id="KW-1185">Reference proteome</keyword>
<keyword id="KW-0698">rRNA processing</keyword>
<keyword id="KW-0949">S-adenosyl-L-methionine</keyword>
<keyword id="KW-0808">Transferase</keyword>
<evidence type="ECO:0000255" key="1">
    <source>
        <dbReference type="HAMAP-Rule" id="MF_00658"/>
    </source>
</evidence>
<sequence length="143" mass="16686">MKLNIIAVGALTKEYKTLYEIYNKKVSFFSTINLIEIKEVTEPNIELKIKKETKLILEKIPKNSKVFYMSLTGKKMKSEEFASLLCEDNLTFIIGGSNGVEEKYFDNKICFSDLTFPHQLFRVILIEQIYRGFAINNNIKYHK</sequence>
<comment type="function">
    <text evidence="1">Specifically methylates the pseudouridine at position 1915 (m3Psi1915) in 23S rRNA.</text>
</comment>
<comment type="catalytic activity">
    <reaction evidence="1">
        <text>pseudouridine(1915) in 23S rRNA + S-adenosyl-L-methionine = N(3)-methylpseudouridine(1915) in 23S rRNA + S-adenosyl-L-homocysteine + H(+)</text>
        <dbReference type="Rhea" id="RHEA:42752"/>
        <dbReference type="Rhea" id="RHEA-COMP:10221"/>
        <dbReference type="Rhea" id="RHEA-COMP:10222"/>
        <dbReference type="ChEBI" id="CHEBI:15378"/>
        <dbReference type="ChEBI" id="CHEBI:57856"/>
        <dbReference type="ChEBI" id="CHEBI:59789"/>
        <dbReference type="ChEBI" id="CHEBI:65314"/>
        <dbReference type="ChEBI" id="CHEBI:74486"/>
        <dbReference type="EC" id="2.1.1.177"/>
    </reaction>
</comment>
<comment type="subunit">
    <text evidence="1">Homodimer.</text>
</comment>
<comment type="subcellular location">
    <subcellularLocation>
        <location evidence="1">Cytoplasm</location>
    </subcellularLocation>
</comment>
<comment type="similarity">
    <text evidence="1">Belongs to the RNA methyltransferase RlmH family.</text>
</comment>
<accession>B3PNC7</accession>